<feature type="chain" id="PRO_0000078679" description="Neuraminidase">
    <location>
        <begin position="1"/>
        <end position="470"/>
    </location>
</feature>
<feature type="topological domain" description="Intravirion" evidence="1">
    <location>
        <begin position="1"/>
        <end position="6"/>
    </location>
</feature>
<feature type="transmembrane region" description="Helical" evidence="1">
    <location>
        <begin position="7"/>
        <end position="27"/>
    </location>
</feature>
<feature type="topological domain" description="Virion surface" evidence="1">
    <location>
        <begin position="28"/>
        <end position="470"/>
    </location>
</feature>
<feature type="region of interest" description="Involved in apical transport and lipid raft association" evidence="1">
    <location>
        <begin position="11"/>
        <end position="33"/>
    </location>
</feature>
<feature type="region of interest" description="Hypervariable stalk region" evidence="1">
    <location>
        <begin position="36"/>
        <end position="90"/>
    </location>
</feature>
<feature type="region of interest" description="Head of neuraminidase" evidence="1">
    <location>
        <begin position="91"/>
        <end position="470"/>
    </location>
</feature>
<feature type="active site" description="Proton donor/acceptor" evidence="1">
    <location>
        <position position="151"/>
    </location>
</feature>
<feature type="active site" description="Nucleophile" evidence="1">
    <location>
        <position position="402"/>
    </location>
</feature>
<feature type="binding site" evidence="1">
    <location>
        <position position="118"/>
    </location>
    <ligand>
        <name>substrate</name>
    </ligand>
</feature>
<feature type="binding site" evidence="1">
    <location>
        <position position="152"/>
    </location>
    <ligand>
        <name>substrate</name>
    </ligand>
</feature>
<feature type="binding site" evidence="1">
    <location>
        <begin position="277"/>
        <end position="278"/>
    </location>
    <ligand>
        <name>substrate</name>
    </ligand>
</feature>
<feature type="binding site" evidence="1">
    <location>
        <position position="293"/>
    </location>
    <ligand>
        <name>substrate</name>
    </ligand>
</feature>
<feature type="binding site" evidence="1">
    <location>
        <position position="294"/>
    </location>
    <ligand>
        <name>Ca(2+)</name>
        <dbReference type="ChEBI" id="CHEBI:29108"/>
    </ligand>
</feature>
<feature type="binding site" evidence="1">
    <location>
        <position position="298"/>
    </location>
    <ligand>
        <name>Ca(2+)</name>
        <dbReference type="ChEBI" id="CHEBI:29108"/>
    </ligand>
</feature>
<feature type="binding site" evidence="1">
    <location>
        <position position="324"/>
    </location>
    <ligand>
        <name>Ca(2+)</name>
        <dbReference type="ChEBI" id="CHEBI:29108"/>
    </ligand>
</feature>
<feature type="binding site" evidence="1">
    <location>
        <position position="368"/>
    </location>
    <ligand>
        <name>substrate</name>
    </ligand>
</feature>
<feature type="glycosylation site" description="N-linked (GlcNAc...) asparagine; by host" evidence="1">
    <location>
        <position position="44"/>
    </location>
</feature>
<feature type="glycosylation site" description="N-linked (GlcNAc...) asparagine; by host" evidence="1">
    <location>
        <position position="58"/>
    </location>
</feature>
<feature type="glycosylation site" description="N-linked (GlcNAc...) asparagine; by host" evidence="1">
    <location>
        <position position="63"/>
    </location>
</feature>
<feature type="glycosylation site" description="N-linked (GlcNAc...) asparagine; by host" evidence="1">
    <location>
        <position position="70"/>
    </location>
</feature>
<feature type="glycosylation site" description="N-linked (GlcNAc...) asparagine; by host" evidence="1">
    <location>
        <position position="88"/>
    </location>
</feature>
<feature type="glycosylation site" description="N-linked (GlcNAc...) asparagine; by host" evidence="1">
    <location>
        <position position="146"/>
    </location>
</feature>
<feature type="glycosylation site" description="N-linked (GlcNAc...) asparagine; by host" evidence="1">
    <location>
        <position position="235"/>
    </location>
</feature>
<feature type="glycosylation site" description="N-linked (GlcNAc...) asparagine; by host" evidence="1">
    <location>
        <position position="365"/>
    </location>
</feature>
<feature type="glycosylation site" description="N-linked (GlcNAc...) asparagine; by host" evidence="1">
    <location>
        <position position="455"/>
    </location>
</feature>
<feature type="disulfide bond" evidence="1">
    <location>
        <begin position="92"/>
        <end position="417"/>
    </location>
</feature>
<feature type="disulfide bond" evidence="1">
    <location>
        <begin position="124"/>
        <end position="129"/>
    </location>
</feature>
<feature type="disulfide bond" evidence="1">
    <location>
        <begin position="184"/>
        <end position="231"/>
    </location>
</feature>
<feature type="disulfide bond" evidence="1">
    <location>
        <begin position="233"/>
        <end position="238"/>
    </location>
</feature>
<feature type="disulfide bond" evidence="1">
    <location>
        <begin position="279"/>
        <end position="292"/>
    </location>
</feature>
<feature type="disulfide bond" evidence="1">
    <location>
        <begin position="281"/>
        <end position="290"/>
    </location>
</feature>
<feature type="disulfide bond" evidence="1">
    <location>
        <begin position="318"/>
        <end position="335"/>
    </location>
</feature>
<feature type="disulfide bond" evidence="1">
    <location>
        <begin position="421"/>
        <end position="447"/>
    </location>
</feature>
<feature type="sequence variant">
    <original>I</original>
    <variation>V</variation>
    <location>
        <position position="427"/>
    </location>
</feature>
<feature type="sequence variant">
    <original>K</original>
    <variation>G</variation>
    <location>
        <position position="434"/>
    </location>
</feature>
<feature type="sequence variant">
    <original>I</original>
    <variation>V</variation>
    <location>
        <position position="437"/>
    </location>
</feature>
<gene>
    <name evidence="1" type="primary">NA</name>
</gene>
<organism>
    <name type="scientific">Influenza A virus (strain A/Chile/1/1983 H1N1)</name>
    <dbReference type="NCBI Taxonomy" id="380985"/>
    <lineage>
        <taxon>Viruses</taxon>
        <taxon>Riboviria</taxon>
        <taxon>Orthornavirae</taxon>
        <taxon>Negarnaviricota</taxon>
        <taxon>Polyploviricotina</taxon>
        <taxon>Insthoviricetes</taxon>
        <taxon>Articulavirales</taxon>
        <taxon>Orthomyxoviridae</taxon>
        <taxon>Alphainfluenzavirus</taxon>
        <taxon>Alphainfluenzavirus influenzae</taxon>
        <taxon>Influenza A virus</taxon>
    </lineage>
</organism>
<name>NRAM_I83A1</name>
<accession>P11485</accession>
<accession>A4GCH8</accession>
<sequence>MNPNQKIITIGSICMTIGIISLILQIGNIISIWVSHSIQTGSQNHTGICNQRIITYENSTWVNQTYVNINNTNVVAGKDTTSVTLAGNSSLCPIRGWAIYSKDNSIRIGSKGDVFVIREPFISCSHLECRTFFLTQGALLNDKHSNGTVKDRSPYRALMSCPIGEAPSPYNSRFESVAWSASACHDGMGWLTIGISGPDDGAVAVLKYNGIITETIKSWRKRILRTQESECVCVNGSCFTIMTDGPSNGPASYRIFKIEKGKITKSIELDAPNSHYEECSCYPDTGTVMCVCRDNWHGSNRPWVSFNQNLDYQIGYICSGVFGDNPRPKDGKGSCDPVTVDGADGVKGFSYRYGNGVWIGRTKSNSSRKGFEMIWDPNGWTDTDSNFLVKQDVVAMTDWSGYSGSFVQHPELTGLDCMRPCFWVELIRGRPREKTTIWTSGSSISFCGVNSDTANWSWPDGAELPFTIDK</sequence>
<dbReference type="EC" id="3.2.1.18" evidence="1"/>
<dbReference type="EMBL" id="X15281">
    <property type="protein sequence ID" value="CAA33354.1"/>
    <property type="molecule type" value="Genomic_RNA"/>
</dbReference>
<dbReference type="EMBL" id="M24783">
    <property type="protein sequence ID" value="AAA96671.1"/>
    <property type="status" value="ALT_SEQ"/>
    <property type="molecule type" value="Genomic_RNA"/>
</dbReference>
<dbReference type="EMBL" id="CY020439">
    <property type="protein sequence ID" value="ABO38343.1"/>
    <property type="molecule type" value="Viral_cRNA"/>
</dbReference>
<dbReference type="SMR" id="P11485"/>
<dbReference type="DrugBank" id="DB00198">
    <property type="generic name" value="Oseltamivir"/>
</dbReference>
<dbReference type="CAZy" id="GH34">
    <property type="family name" value="Glycoside Hydrolase Family 34"/>
</dbReference>
<dbReference type="GlyCosmos" id="P11485">
    <property type="glycosylation" value="9 sites, No reported glycans"/>
</dbReference>
<dbReference type="PRO" id="PR:P11485"/>
<dbReference type="Proteomes" id="UP000008582">
    <property type="component" value="Genome"/>
</dbReference>
<dbReference type="GO" id="GO:0020002">
    <property type="term" value="C:host cell plasma membrane"/>
    <property type="evidence" value="ECO:0007669"/>
    <property type="project" value="UniProtKB-SubCell"/>
</dbReference>
<dbReference type="GO" id="GO:0016020">
    <property type="term" value="C:membrane"/>
    <property type="evidence" value="ECO:0007669"/>
    <property type="project" value="UniProtKB-UniRule"/>
</dbReference>
<dbReference type="GO" id="GO:0055036">
    <property type="term" value="C:virion membrane"/>
    <property type="evidence" value="ECO:0007669"/>
    <property type="project" value="UniProtKB-SubCell"/>
</dbReference>
<dbReference type="GO" id="GO:0004308">
    <property type="term" value="F:exo-alpha-sialidase activity"/>
    <property type="evidence" value="ECO:0007669"/>
    <property type="project" value="UniProtKB-UniRule"/>
</dbReference>
<dbReference type="GO" id="GO:0046872">
    <property type="term" value="F:metal ion binding"/>
    <property type="evidence" value="ECO:0007669"/>
    <property type="project" value="UniProtKB-UniRule"/>
</dbReference>
<dbReference type="GO" id="GO:0005975">
    <property type="term" value="P:carbohydrate metabolic process"/>
    <property type="evidence" value="ECO:0007669"/>
    <property type="project" value="InterPro"/>
</dbReference>
<dbReference type="GO" id="GO:0046761">
    <property type="term" value="P:viral budding from plasma membrane"/>
    <property type="evidence" value="ECO:0007669"/>
    <property type="project" value="UniProtKB-UniRule"/>
</dbReference>
<dbReference type="CDD" id="cd15483">
    <property type="entry name" value="Influenza_NA"/>
    <property type="match status" value="1"/>
</dbReference>
<dbReference type="FunFam" id="2.120.10.10:FF:000001">
    <property type="entry name" value="Neuraminidase"/>
    <property type="match status" value="1"/>
</dbReference>
<dbReference type="Gene3D" id="2.120.10.10">
    <property type="match status" value="1"/>
</dbReference>
<dbReference type="HAMAP" id="MF_04071">
    <property type="entry name" value="INFV_NRAM"/>
    <property type="match status" value="1"/>
</dbReference>
<dbReference type="InterPro" id="IPR001860">
    <property type="entry name" value="Glyco_hydro_34"/>
</dbReference>
<dbReference type="InterPro" id="IPR033654">
    <property type="entry name" value="Sialidase_Influenza_A/B"/>
</dbReference>
<dbReference type="InterPro" id="IPR036278">
    <property type="entry name" value="Sialidase_sf"/>
</dbReference>
<dbReference type="Pfam" id="PF00064">
    <property type="entry name" value="Neur"/>
    <property type="match status" value="1"/>
</dbReference>
<dbReference type="SUPFAM" id="SSF50939">
    <property type="entry name" value="Sialidases"/>
    <property type="match status" value="1"/>
</dbReference>
<organismHost>
    <name type="scientific">Aves</name>
    <dbReference type="NCBI Taxonomy" id="8782"/>
</organismHost>
<organismHost>
    <name type="scientific">Homo sapiens</name>
    <name type="common">Human</name>
    <dbReference type="NCBI Taxonomy" id="9606"/>
</organismHost>
<organismHost>
    <name type="scientific">Sus scrofa</name>
    <name type="common">Pig</name>
    <dbReference type="NCBI Taxonomy" id="9823"/>
</organismHost>
<evidence type="ECO:0000255" key="1">
    <source>
        <dbReference type="HAMAP-Rule" id="MF_04071"/>
    </source>
</evidence>
<reference key="1">
    <citation type="journal article" date="1988" name="Arch. Virol.">
        <title>Complete nucleotide sequence of the neuraminidase gene of the human influenza virus A/Chile/1/83 (H1N1).</title>
        <authorList>
            <person name="Schreier E."/>
            <person name="Roeske H."/>
            <person name="Driesel G."/>
            <person name="Kuenkel U."/>
            <person name="Petzold D.R."/>
            <person name="Berlinghoff R."/>
            <person name="Michel S."/>
        </authorList>
    </citation>
    <scope>NUCLEOTIDE SEQUENCE [GENOMIC RNA]</scope>
</reference>
<reference key="2">
    <citation type="journal article" date="2004" name="Virus Res.">
        <title>Assembly and budding of influenza virus.</title>
        <authorList>
            <person name="Nayak D.P."/>
            <person name="Hui E.K."/>
            <person name="Barman S."/>
        </authorList>
    </citation>
    <scope>REVIEW</scope>
</reference>
<reference key="3">
    <citation type="journal article" date="2005" name="N. Engl. J. Med.">
        <title>Neuraminidase inhibitors for influenza.</title>
        <authorList>
            <person name="Moscona A."/>
        </authorList>
    </citation>
    <scope>REVIEW</scope>
</reference>
<reference key="4">
    <citation type="journal article" date="2005" name="Biol. Pharm. Bull.">
        <title>Sialobiology of influenza: molecular mechanism of host range variation of influenza viruses.</title>
        <authorList>
            <person name="Suzuki Y."/>
        </authorList>
    </citation>
    <scope>REVIEW</scope>
</reference>
<protein>
    <recommendedName>
        <fullName evidence="1">Neuraminidase</fullName>
        <ecNumber evidence="1">3.2.1.18</ecNumber>
    </recommendedName>
</protein>
<proteinExistence type="inferred from homology"/>
<comment type="function">
    <text evidence="1">Catalyzes the removal of terminal sialic acid residues from viral and cellular glycoconjugates. Cleaves off the terminal sialic acids on the glycosylated HA during virus budding to facilitate virus release. Additionally helps virus spread through the circulation by further removing sialic acids from the cell surface. These cleavages prevent self-aggregation and ensure the efficient spread of the progeny virus from cell to cell. Otherwise, infection would be limited to one round of replication. Described as a receptor-destroying enzyme because it cleaves a terminal sialic acid from the cellular receptors. May facilitate viral invasion of the upper airways by cleaving the sialic acid moieties on the mucin of the airway epithelial cells. Likely to plays a role in the budding process through its association with lipid rafts during intracellular transport. May additionally display a raft-association independent effect on budding. Plays a role in the determination of host range restriction on replication and virulence. Sialidase activity in late endosome/lysosome traffic seems to enhance virus replication.</text>
</comment>
<comment type="catalytic activity">
    <reaction evidence="1">
        <text>Hydrolysis of alpha-(2-&gt;3)-, alpha-(2-&gt;6)-, alpha-(2-&gt;8)- glycosidic linkages of terminal sialic acid residues in oligosaccharides, glycoproteins, glycolipids, colominic acid and synthetic substrates.</text>
        <dbReference type="EC" id="3.2.1.18"/>
    </reaction>
</comment>
<comment type="cofactor">
    <cofactor evidence="1">
        <name>Ca(2+)</name>
        <dbReference type="ChEBI" id="CHEBI:29108"/>
    </cofactor>
</comment>
<comment type="activity regulation">
    <text evidence="1">Inhibited by the neuraminidase inhibitors zanamivir (Relenza) and oseltamivir (Tamiflu). These drugs interfere with the release of progeny virus from infected cells and are effective against all influenza strains. Resistance to neuraminidase inhibitors is quite rare.</text>
</comment>
<comment type="subunit">
    <text evidence="1">Homotetramer.</text>
</comment>
<comment type="subcellular location">
    <subcellularLocation>
        <location evidence="1">Virion membrane</location>
    </subcellularLocation>
    <subcellularLocation>
        <location evidence="1">Host apical cell membrane</location>
        <topology evidence="1">Single-pass type II membrane protein</topology>
    </subcellularLocation>
    <text evidence="1">Preferentially accumulates at the apical plasma membrane in infected polarized epithelial cells, which is the virus assembly site. Uses lipid rafts for cell surface transport and apical sorting. In the virion, forms a mushroom-shaped spike on the surface of the membrane.</text>
</comment>
<comment type="domain">
    <text evidence="1">Intact N-terminus is essential for virion morphogenesis. Possesses two apical sorting signals, one in the ectodomain, which is likely to be a glycan, and the other in the transmembrane domain. The transmembrane domain also plays a role in lipid raft association.</text>
</comment>
<comment type="PTM">
    <text evidence="1">N-glycosylated.</text>
</comment>
<comment type="miscellaneous">
    <text>The influenza A genome consist of 8 RNA segments. Genetic variation of hemagglutinin and/or neuraminidase genes results in the emergence of new influenza strains. The mechanism of variation can be the result of point mutations or the result of genetic reassortment between segments of two different strains.</text>
</comment>
<comment type="similarity">
    <text evidence="1">Belongs to the glycosyl hydrolase 34 family.</text>
</comment>
<keyword id="KW-0106">Calcium</keyword>
<keyword id="KW-1015">Disulfide bond</keyword>
<keyword id="KW-0325">Glycoprotein</keyword>
<keyword id="KW-0326">Glycosidase</keyword>
<keyword id="KW-1032">Host cell membrane</keyword>
<keyword id="KW-1043">Host membrane</keyword>
<keyword id="KW-0378">Hydrolase</keyword>
<keyword id="KW-0472">Membrane</keyword>
<keyword id="KW-0479">Metal-binding</keyword>
<keyword id="KW-0735">Signal-anchor</keyword>
<keyword id="KW-0812">Transmembrane</keyword>
<keyword id="KW-1133">Transmembrane helix</keyword>
<keyword id="KW-0946">Virion</keyword>